<evidence type="ECO:0000250" key="1"/>
<evidence type="ECO:0000305" key="2"/>
<name>PAP5_PARMA</name>
<comment type="function">
    <text>Exhibits unusual shark repellent and surfactant properties. Forms voltage-dependent, ion-permeable channels in membranes. At high concentration causes cell membrane lysis.</text>
</comment>
<comment type="subunit">
    <text evidence="1">Monomer. In aqueous solution exists as a tetramer (By similarity).</text>
</comment>
<comment type="subcellular location">
    <subcellularLocation>
        <location>Secreted</location>
    </subcellularLocation>
    <subcellularLocation>
        <location>Target cell membrane</location>
    </subcellularLocation>
    <text>Forms a helical membrane channel in the prey.</text>
</comment>
<comment type="domain">
    <text>Consists of a C-terminal hydrophilic region and a predominantly hydrophobic remainder.</text>
</comment>
<comment type="similarity">
    <text evidence="2">Belongs to the pardaxin family.</text>
</comment>
<accession>P81862</accession>
<dbReference type="GO" id="GO:0005576">
    <property type="term" value="C:extracellular region"/>
    <property type="evidence" value="ECO:0007669"/>
    <property type="project" value="UniProtKB-SubCell"/>
</dbReference>
<dbReference type="GO" id="GO:0016020">
    <property type="term" value="C:membrane"/>
    <property type="evidence" value="ECO:0007669"/>
    <property type="project" value="UniProtKB-KW"/>
</dbReference>
<dbReference type="GO" id="GO:0044218">
    <property type="term" value="C:other organism cell membrane"/>
    <property type="evidence" value="ECO:0007669"/>
    <property type="project" value="UniProtKB-KW"/>
</dbReference>
<dbReference type="GO" id="GO:0090729">
    <property type="term" value="F:toxin activity"/>
    <property type="evidence" value="ECO:0007669"/>
    <property type="project" value="UniProtKB-KW"/>
</dbReference>
<dbReference type="GO" id="GO:0006811">
    <property type="term" value="P:monoatomic ion transport"/>
    <property type="evidence" value="ECO:0007669"/>
    <property type="project" value="UniProtKB-KW"/>
</dbReference>
<dbReference type="InterPro" id="IPR009990">
    <property type="entry name" value="Pardaxin"/>
</dbReference>
<dbReference type="Pfam" id="PF07425">
    <property type="entry name" value="Pardaxin"/>
    <property type="match status" value="1"/>
</dbReference>
<dbReference type="PIRSF" id="PIRSF037561">
    <property type="entry name" value="Pardaxin"/>
    <property type="match status" value="1"/>
</dbReference>
<reference key="1">
    <citation type="journal article" date="1998" name="FEBS Lett.">
        <title>Isolation, characterization and synthesis of a novel paradaxin isoform.</title>
        <authorList>
            <person name="Adermann K."/>
            <person name="Raida M."/>
            <person name="Paul Y."/>
            <person name="Abu-Raya S."/>
            <person name="Bloch-Shilderman E."/>
            <person name="Lazarovici P."/>
            <person name="Hochman J."/>
            <person name="Wellhoner H."/>
        </authorList>
    </citation>
    <scope>PROTEIN SEQUENCE</scope>
    <scope>CHARACTERIZATION</scope>
    <scope>SYNTHESIS</scope>
    <source>
        <tissue>Skin secretion</tissue>
    </source>
</reference>
<keyword id="KW-0903">Direct protein sequencing</keyword>
<keyword id="KW-0406">Ion transport</keyword>
<keyword id="KW-0472">Membrane</keyword>
<keyword id="KW-0964">Secreted</keyword>
<keyword id="KW-1052">Target cell membrane</keyword>
<keyword id="KW-1053">Target membrane</keyword>
<keyword id="KW-0800">Toxin</keyword>
<keyword id="KW-0812">Transmembrane</keyword>
<keyword id="KW-0813">Transport</keyword>
<feature type="peptide" id="PRO_0000044786" description="Pardaxin P-5">
    <location>
        <begin position="1"/>
        <end position="33"/>
    </location>
</feature>
<sequence>GFFALIPKIISSPLFKTLLSAVGSALSSSGDQE</sequence>
<organism>
    <name type="scientific">Pardachirus marmoratus</name>
    <name type="common">Finless sole</name>
    <name type="synonym">Achirus marmoratus</name>
    <dbReference type="NCBI Taxonomy" id="31087"/>
    <lineage>
        <taxon>Eukaryota</taxon>
        <taxon>Metazoa</taxon>
        <taxon>Chordata</taxon>
        <taxon>Craniata</taxon>
        <taxon>Vertebrata</taxon>
        <taxon>Euteleostomi</taxon>
        <taxon>Actinopterygii</taxon>
        <taxon>Neopterygii</taxon>
        <taxon>Teleostei</taxon>
        <taxon>Neoteleostei</taxon>
        <taxon>Acanthomorphata</taxon>
        <taxon>Carangaria</taxon>
        <taxon>Pleuronectiformes</taxon>
        <taxon>Pleuronectoidei</taxon>
        <taxon>Soleidae</taxon>
        <taxon>Pardachirus</taxon>
    </lineage>
</organism>
<protein>
    <recommendedName>
        <fullName>Pardaxin P-5</fullName>
        <shortName>Pardaxin P5</shortName>
    </recommendedName>
    <alternativeName>
        <fullName>Pardaxin Pa5</fullName>
    </alternativeName>
</protein>
<proteinExistence type="evidence at protein level"/>